<evidence type="ECO:0000255" key="1"/>
<evidence type="ECO:0000269" key="2">
    <source>
    </source>
</evidence>
<evidence type="ECO:0000269" key="3">
    <source>
    </source>
</evidence>
<evidence type="ECO:0000269" key="4">
    <source>
    </source>
</evidence>
<evidence type="ECO:0000269" key="5">
    <source>
    </source>
</evidence>
<evidence type="ECO:0000269" key="6">
    <source ref="3"/>
</evidence>
<evidence type="ECO:0000269" key="7">
    <source ref="7"/>
</evidence>
<evidence type="ECO:0000269" key="8">
    <source ref="9"/>
</evidence>
<evidence type="ECO:0000305" key="9"/>
<evidence type="ECO:0000312" key="10">
    <source>
        <dbReference type="HGNC" id="HGNC:920"/>
    </source>
</evidence>
<gene>
    <name evidence="10" type="primary">B3GALT5</name>
</gene>
<keyword id="KW-0325">Glycoprotein</keyword>
<keyword id="KW-0328">Glycosyltransferase</keyword>
<keyword id="KW-0333">Golgi apparatus</keyword>
<keyword id="KW-0443">Lipid metabolism</keyword>
<keyword id="KW-0472">Membrane</keyword>
<keyword id="KW-1267">Proteomics identification</keyword>
<keyword id="KW-1185">Reference proteome</keyword>
<keyword id="KW-0735">Signal-anchor</keyword>
<keyword id="KW-0808">Transferase</keyword>
<keyword id="KW-0812">Transmembrane</keyword>
<keyword id="KW-1133">Transmembrane helix</keyword>
<protein>
    <recommendedName>
        <fullName evidence="9">Beta-1,3-galactosyltransferase 5</fullName>
        <shortName>Beta-1,3-GalTase 5</shortName>
        <shortName>Beta3Gal-T5</shortName>
        <shortName>Beta3GalT5</shortName>
        <shortName>b3Gal-T5</shortName>
        <ecNumber evidence="2 3">2.4.1.-</ecNumber>
    </recommendedName>
    <alternativeName>
        <fullName>Beta-3-Gx-T5</fullName>
    </alternativeName>
    <alternativeName>
        <fullName>UDP-Gal:beta-GlcNAc beta-1,3-galactosyltransferase 5</fullName>
    </alternativeName>
    <alternativeName>
        <fullName>UDP-galactose:beta-N-acetylglucosamine beta-1,3-galactosyltransferase 5</fullName>
    </alternativeName>
</protein>
<comment type="function">
    <text evidence="2 3">Catalyzes the transfer of Gal to GlcNAc-based acceptors with a preference for the core3 O-linked glycan GlcNAc(beta1,3)GalNAc structure. Can use glycolipid LC3Cer as an efficient acceptor.</text>
</comment>
<comment type="catalytic activity">
    <reaction evidence="2 3">
        <text>a globoside Gb4Cer (d18:1(4E)) + UDP-alpha-D-galactose = a globoside GalGb4Cer (d18:1(4E)) + UDP + H(+)</text>
        <dbReference type="Rhea" id="RHEA:41996"/>
        <dbReference type="ChEBI" id="CHEBI:15378"/>
        <dbReference type="ChEBI" id="CHEBI:18259"/>
        <dbReference type="ChEBI" id="CHEBI:58223"/>
        <dbReference type="ChEBI" id="CHEBI:62571"/>
        <dbReference type="ChEBI" id="CHEBI:66914"/>
    </reaction>
    <physiologicalReaction direction="left-to-right" evidence="2 3">
        <dbReference type="Rhea" id="RHEA:41997"/>
    </physiologicalReaction>
</comment>
<comment type="pathway">
    <text>Protein modification; protein glycosylation.</text>
</comment>
<comment type="interaction">
    <interactant intactId="EBI-14141066">
        <id>Q9Y2C3</id>
    </interactant>
    <interactant intactId="EBI-11749983">
        <id>Q9UHP7-3</id>
        <label>CLEC2D</label>
    </interactant>
    <organismsDiffer>false</organismsDiffer>
    <experiments>3</experiments>
</comment>
<comment type="interaction">
    <interactant intactId="EBI-14141066">
        <id>Q9Y2C3</id>
    </interactant>
    <interactant intactId="EBI-12074168">
        <id>P81534</id>
        <label>DEFB103B</label>
    </interactant>
    <organismsDiffer>false</organismsDiffer>
    <experiments>3</experiments>
</comment>
<comment type="subcellular location">
    <subcellularLocation>
        <location evidence="9">Golgi apparatus membrane</location>
        <topology evidence="9">Single-pass type II membrane protein</topology>
    </subcellularLocation>
</comment>
<comment type="tissue specificity">
    <text evidence="2">Expressed in stomach, jejunum, colon, pancreas, small intestine, testis and gastrointestinal and pancreatic cancer cell lines. Hardly detected in lung, liver, adrenal gland and peripheral blood leukocytes.</text>
</comment>
<comment type="similarity">
    <text evidence="9">Belongs to the glycosyltransferase 31 family.</text>
</comment>
<comment type="online information" name="Functional Glycomics Gateway - GTase">
    <link uri="http://www.functionalglycomics.org/glycomics/molecule/jsp/glycoEnzyme/viewGlycoEnzyme.jsp?gbpId=gt_hum_432"/>
    <text>Beta-1,3-galactosyltransferase 5</text>
</comment>
<proteinExistence type="evidence at protein level"/>
<feature type="chain" id="PRO_0000219164" description="Beta-1,3-galactosyltransferase 5">
    <location>
        <begin position="1"/>
        <end position="310"/>
    </location>
</feature>
<feature type="topological domain" description="Cytoplasmic" evidence="1">
    <location>
        <begin position="1"/>
        <end position="7"/>
    </location>
</feature>
<feature type="transmembrane region" description="Helical; Signal-anchor for type II membrane protein" evidence="1">
    <location>
        <begin position="8"/>
        <end position="28"/>
    </location>
</feature>
<feature type="topological domain" description="Lumenal" evidence="1">
    <location>
        <begin position="29"/>
        <end position="310"/>
    </location>
</feature>
<feature type="glycosylation site" description="N-linked (GlcNAc...) asparagine" evidence="1">
    <location>
        <position position="130"/>
    </location>
</feature>
<feature type="glycosylation site" description="N-linked (GlcNAc...) asparagine" evidence="1">
    <location>
        <position position="174"/>
    </location>
</feature>
<feature type="glycosylation site" description="N-linked (GlcNAc...) asparagine" evidence="1">
    <location>
        <position position="231"/>
    </location>
</feature>
<feature type="sequence variant" id="VAR_049347" description="In dbSNP:rs12627708.">
    <original>S</original>
    <variation>R</variation>
    <location>
        <position position="27"/>
    </location>
</feature>
<feature type="sequence variant" id="VAR_020460" description="In dbSNP:rs3746887." evidence="4 5 6 7 8">
    <original>M</original>
    <variation>T</variation>
    <location>
        <position position="85"/>
    </location>
</feature>
<feature type="sequence variant" id="VAR_033536" description="In dbSNP:rs734411.">
    <original>R</original>
    <variation>H</variation>
    <location>
        <position position="144"/>
    </location>
</feature>
<feature type="sequence conflict" description="In Ref. 3; CAB91547." evidence="9" ref="3">
    <original>F</original>
    <variation>Y</variation>
    <location>
        <position position="23"/>
    </location>
</feature>
<feature type="sequence conflict" description="In Ref. 3; CAB91547." evidence="9" ref="3">
    <original>Y</original>
    <variation>N</variation>
    <location>
        <position position="26"/>
    </location>
</feature>
<feature type="sequence conflict" description="In Ref. 9; BAA94498." evidence="9" ref="9">
    <original>LDYWQ</original>
    <variation>WTTGR</variation>
    <location>
        <begin position="293"/>
        <end position="297"/>
    </location>
</feature>
<organism>
    <name type="scientific">Homo sapiens</name>
    <name type="common">Human</name>
    <dbReference type="NCBI Taxonomy" id="9606"/>
    <lineage>
        <taxon>Eukaryota</taxon>
        <taxon>Metazoa</taxon>
        <taxon>Chordata</taxon>
        <taxon>Craniata</taxon>
        <taxon>Vertebrata</taxon>
        <taxon>Euteleostomi</taxon>
        <taxon>Mammalia</taxon>
        <taxon>Eutheria</taxon>
        <taxon>Euarchontoglires</taxon>
        <taxon>Primates</taxon>
        <taxon>Haplorrhini</taxon>
        <taxon>Catarrhini</taxon>
        <taxon>Hominidae</taxon>
        <taxon>Homo</taxon>
    </lineage>
</organism>
<reference key="1">
    <citation type="journal article" date="1999" name="J. Biol. Chem.">
        <title>Cloning, expression, and characterization of a novel UDP-galactose:beta-N-acetylglucosamine beta1,3-galactosyltransferase (beta3Gal-T5) responsible for synthesis of type 1 chain in colorectal and pancreatic epithelia and tumor cells derived therefrom.</title>
        <authorList>
            <person name="Isshiki S."/>
            <person name="Togayachi A."/>
            <person name="Kudo T."/>
            <person name="Nishihara S."/>
            <person name="Watanabe M."/>
            <person name="Kubota T."/>
            <person name="Kitajima M."/>
            <person name="Shiraishi N."/>
            <person name="Sasaki K."/>
            <person name="Andoh T."/>
            <person name="Narimatsu H."/>
        </authorList>
    </citation>
    <scope>NUCLEOTIDE SEQUENCE [MRNA]</scope>
    <source>
        <tissue>Colon adenocarcinoma</tissue>
    </source>
</reference>
<reference key="2">
    <citation type="journal article" date="1999" name="Eur. J. Biochem.">
        <title>Molecular cloning of a human UDP-galactose:GlcNAcbeta1,3GalNAc beta1, 3 galactosyltransferase gene encoding an O-linked core3-elongation enzyme.</title>
        <authorList>
            <person name="Zhou D."/>
            <person name="Berger E.G."/>
            <person name="Hennet T."/>
        </authorList>
    </citation>
    <scope>NUCLEOTIDE SEQUENCE [GENOMIC DNA]</scope>
    <scope>FUNCTION</scope>
    <scope>CATALYTIC ACTIVITY</scope>
    <scope>TISSUE SPECIFICITY</scope>
</reference>
<reference key="3">
    <citation type="submission" date="1998-05" db="EMBL/GenBank/DDBJ databases">
        <title>Cloning and expression of two beta-1,3-galactosyltransferases: beta3gal-T5 and beta3gal-T6.</title>
        <authorList>
            <person name="Amado M."/>
            <person name="Carneiro F."/>
            <person name="Clausen H."/>
        </authorList>
    </citation>
    <scope>NUCLEOTIDE SEQUENCE [GENOMIC DNA]</scope>
    <scope>VARIANT THR-85</scope>
</reference>
<reference key="4">
    <citation type="journal article" date="2003" name="Proc. Natl. Acad. Sci. U.S.A.">
        <title>An endogenous retroviral long terminal repeat is the dominant promoter for human beta1,3-galactosyltransferase 5 in the colon.</title>
        <authorList>
            <person name="Dunn C.A."/>
            <person name="Medstrand P."/>
            <person name="Mager D.L."/>
        </authorList>
    </citation>
    <scope>NUCLEOTIDE SEQUENCE [MRNA]</scope>
</reference>
<reference key="5">
    <citation type="journal article" date="2004" name="Nat. Genet.">
        <title>Complete sequencing and characterization of 21,243 full-length human cDNAs.</title>
        <authorList>
            <person name="Ota T."/>
            <person name="Suzuki Y."/>
            <person name="Nishikawa T."/>
            <person name="Otsuki T."/>
            <person name="Sugiyama T."/>
            <person name="Irie R."/>
            <person name="Wakamatsu A."/>
            <person name="Hayashi K."/>
            <person name="Sato H."/>
            <person name="Nagai K."/>
            <person name="Kimura K."/>
            <person name="Makita H."/>
            <person name="Sekine M."/>
            <person name="Obayashi M."/>
            <person name="Nishi T."/>
            <person name="Shibahara T."/>
            <person name="Tanaka T."/>
            <person name="Ishii S."/>
            <person name="Yamamoto J."/>
            <person name="Saito K."/>
            <person name="Kawai Y."/>
            <person name="Isono Y."/>
            <person name="Nakamura Y."/>
            <person name="Nagahari K."/>
            <person name="Murakami K."/>
            <person name="Yasuda T."/>
            <person name="Iwayanagi T."/>
            <person name="Wagatsuma M."/>
            <person name="Shiratori A."/>
            <person name="Sudo H."/>
            <person name="Hosoiri T."/>
            <person name="Kaku Y."/>
            <person name="Kodaira H."/>
            <person name="Kondo H."/>
            <person name="Sugawara M."/>
            <person name="Takahashi M."/>
            <person name="Kanda K."/>
            <person name="Yokoi T."/>
            <person name="Furuya T."/>
            <person name="Kikkawa E."/>
            <person name="Omura Y."/>
            <person name="Abe K."/>
            <person name="Kamihara K."/>
            <person name="Katsuta N."/>
            <person name="Sato K."/>
            <person name="Tanikawa M."/>
            <person name="Yamazaki M."/>
            <person name="Ninomiya K."/>
            <person name="Ishibashi T."/>
            <person name="Yamashita H."/>
            <person name="Murakawa K."/>
            <person name="Fujimori K."/>
            <person name="Tanai H."/>
            <person name="Kimata M."/>
            <person name="Watanabe M."/>
            <person name="Hiraoka S."/>
            <person name="Chiba Y."/>
            <person name="Ishida S."/>
            <person name="Ono Y."/>
            <person name="Takiguchi S."/>
            <person name="Watanabe S."/>
            <person name="Yosida M."/>
            <person name="Hotuta T."/>
            <person name="Kusano J."/>
            <person name="Kanehori K."/>
            <person name="Takahashi-Fujii A."/>
            <person name="Hara H."/>
            <person name="Tanase T.-O."/>
            <person name="Nomura Y."/>
            <person name="Togiya S."/>
            <person name="Komai F."/>
            <person name="Hara R."/>
            <person name="Takeuchi K."/>
            <person name="Arita M."/>
            <person name="Imose N."/>
            <person name="Musashino K."/>
            <person name="Yuuki H."/>
            <person name="Oshima A."/>
            <person name="Sasaki N."/>
            <person name="Aotsuka S."/>
            <person name="Yoshikawa Y."/>
            <person name="Matsunawa H."/>
            <person name="Ichihara T."/>
            <person name="Shiohata N."/>
            <person name="Sano S."/>
            <person name="Moriya S."/>
            <person name="Momiyama H."/>
            <person name="Satoh N."/>
            <person name="Takami S."/>
            <person name="Terashima Y."/>
            <person name="Suzuki O."/>
            <person name="Nakagawa S."/>
            <person name="Senoh A."/>
            <person name="Mizoguchi H."/>
            <person name="Goto Y."/>
            <person name="Shimizu F."/>
            <person name="Wakebe H."/>
            <person name="Hishigaki H."/>
            <person name="Watanabe T."/>
            <person name="Sugiyama A."/>
            <person name="Takemoto M."/>
            <person name="Kawakami B."/>
            <person name="Yamazaki M."/>
            <person name="Watanabe K."/>
            <person name="Kumagai A."/>
            <person name="Itakura S."/>
            <person name="Fukuzumi Y."/>
            <person name="Fujimori Y."/>
            <person name="Komiyama M."/>
            <person name="Tashiro H."/>
            <person name="Tanigami A."/>
            <person name="Fujiwara T."/>
            <person name="Ono T."/>
            <person name="Yamada K."/>
            <person name="Fujii Y."/>
            <person name="Ozaki K."/>
            <person name="Hirao M."/>
            <person name="Ohmori Y."/>
            <person name="Kawabata A."/>
            <person name="Hikiji T."/>
            <person name="Kobatake N."/>
            <person name="Inagaki H."/>
            <person name="Ikema Y."/>
            <person name="Okamoto S."/>
            <person name="Okitani R."/>
            <person name="Kawakami T."/>
            <person name="Noguchi S."/>
            <person name="Itoh T."/>
            <person name="Shigeta K."/>
            <person name="Senba T."/>
            <person name="Matsumura K."/>
            <person name="Nakajima Y."/>
            <person name="Mizuno T."/>
            <person name="Morinaga M."/>
            <person name="Sasaki M."/>
            <person name="Togashi T."/>
            <person name="Oyama M."/>
            <person name="Hata H."/>
            <person name="Watanabe M."/>
            <person name="Komatsu T."/>
            <person name="Mizushima-Sugano J."/>
            <person name="Satoh T."/>
            <person name="Shirai Y."/>
            <person name="Takahashi Y."/>
            <person name="Nakagawa K."/>
            <person name="Okumura K."/>
            <person name="Nagase T."/>
            <person name="Nomura N."/>
            <person name="Kikuchi H."/>
            <person name="Masuho Y."/>
            <person name="Yamashita R."/>
            <person name="Nakai K."/>
            <person name="Yada T."/>
            <person name="Nakamura Y."/>
            <person name="Ohara O."/>
            <person name="Isogai T."/>
            <person name="Sugano S."/>
        </authorList>
    </citation>
    <scope>NUCLEOTIDE SEQUENCE [LARGE SCALE MRNA]</scope>
    <scope>VARIANT THR-85</scope>
    <source>
        <tissue>Trachea</tissue>
    </source>
</reference>
<reference key="6">
    <citation type="journal article" date="2000" name="Nature">
        <title>The DNA sequence of human chromosome 21.</title>
        <authorList>
            <person name="Hattori M."/>
            <person name="Fujiyama A."/>
            <person name="Taylor T.D."/>
            <person name="Watanabe H."/>
            <person name="Yada T."/>
            <person name="Park H.-S."/>
            <person name="Toyoda A."/>
            <person name="Ishii K."/>
            <person name="Totoki Y."/>
            <person name="Choi D.-K."/>
            <person name="Groner Y."/>
            <person name="Soeda E."/>
            <person name="Ohki M."/>
            <person name="Takagi T."/>
            <person name="Sakaki Y."/>
            <person name="Taudien S."/>
            <person name="Blechschmidt K."/>
            <person name="Polley A."/>
            <person name="Menzel U."/>
            <person name="Delabar J."/>
            <person name="Kumpf K."/>
            <person name="Lehmann R."/>
            <person name="Patterson D."/>
            <person name="Reichwald K."/>
            <person name="Rump A."/>
            <person name="Schillhabel M."/>
            <person name="Schudy A."/>
            <person name="Zimmermann W."/>
            <person name="Rosenthal A."/>
            <person name="Kudoh J."/>
            <person name="Shibuya K."/>
            <person name="Kawasaki K."/>
            <person name="Asakawa S."/>
            <person name="Shintani A."/>
            <person name="Sasaki T."/>
            <person name="Nagamine K."/>
            <person name="Mitsuyama S."/>
            <person name="Antonarakis S.E."/>
            <person name="Minoshima S."/>
            <person name="Shimizu N."/>
            <person name="Nordsiek G."/>
            <person name="Hornischer K."/>
            <person name="Brandt P."/>
            <person name="Scharfe M."/>
            <person name="Schoen O."/>
            <person name="Desario A."/>
            <person name="Reichelt J."/>
            <person name="Kauer G."/>
            <person name="Bloecker H."/>
            <person name="Ramser J."/>
            <person name="Beck A."/>
            <person name="Klages S."/>
            <person name="Hennig S."/>
            <person name="Riesselmann L."/>
            <person name="Dagand E."/>
            <person name="Wehrmeyer S."/>
            <person name="Borzym K."/>
            <person name="Gardiner K."/>
            <person name="Nizetic D."/>
            <person name="Francis F."/>
            <person name="Lehrach H."/>
            <person name="Reinhardt R."/>
            <person name="Yaspo M.-L."/>
        </authorList>
    </citation>
    <scope>NUCLEOTIDE SEQUENCE [LARGE SCALE GENOMIC DNA]</scope>
</reference>
<reference key="7">
    <citation type="submission" date="2005-09" db="EMBL/GenBank/DDBJ databases">
        <authorList>
            <person name="Mural R.J."/>
            <person name="Istrail S."/>
            <person name="Sutton G.G."/>
            <person name="Florea L."/>
            <person name="Halpern A.L."/>
            <person name="Mobarry C.M."/>
            <person name="Lippert R."/>
            <person name="Walenz B."/>
            <person name="Shatkay H."/>
            <person name="Dew I."/>
            <person name="Miller J.R."/>
            <person name="Flanigan M.J."/>
            <person name="Edwards N.J."/>
            <person name="Bolanos R."/>
            <person name="Fasulo D."/>
            <person name="Halldorsson B.V."/>
            <person name="Hannenhalli S."/>
            <person name="Turner R."/>
            <person name="Yooseph S."/>
            <person name="Lu F."/>
            <person name="Nusskern D.R."/>
            <person name="Shue B.C."/>
            <person name="Zheng X.H."/>
            <person name="Zhong F."/>
            <person name="Delcher A.L."/>
            <person name="Huson D.H."/>
            <person name="Kravitz S.A."/>
            <person name="Mouchard L."/>
            <person name="Reinert K."/>
            <person name="Remington K.A."/>
            <person name="Clark A.G."/>
            <person name="Waterman M.S."/>
            <person name="Eichler E.E."/>
            <person name="Adams M.D."/>
            <person name="Hunkapiller M.W."/>
            <person name="Myers E.W."/>
            <person name="Venter J.C."/>
        </authorList>
    </citation>
    <scope>NUCLEOTIDE SEQUENCE [LARGE SCALE GENOMIC DNA]</scope>
    <scope>VARIANT THR-85</scope>
</reference>
<reference key="8">
    <citation type="journal article" date="2004" name="Genome Res.">
        <title>The status, quality, and expansion of the NIH full-length cDNA project: the Mammalian Gene Collection (MGC).</title>
        <authorList>
            <consortium name="The MGC Project Team"/>
        </authorList>
    </citation>
    <scope>NUCLEOTIDE SEQUENCE [LARGE SCALE MRNA]</scope>
    <scope>VARIANT THR-85</scope>
    <source>
        <tissue>Colon</tissue>
    </source>
</reference>
<reference key="9">
    <citation type="submission" date="2000-04" db="EMBL/GenBank/DDBJ databases">
        <authorList>
            <person name="Liu Y."/>
            <person name="Saitou N."/>
        </authorList>
    </citation>
    <scope>NUCLEOTIDE SEQUENCE [GENOMIC DNA] OF 1-298</scope>
    <scope>VARIANT THR-85</scope>
</reference>
<reference key="10">
    <citation type="journal article" date="1999" name="Biochim. Biophys. Acta">
        <title>Identification and characterization of large galactosyltransferase gene families: galactosyltransferases for all functions.</title>
        <authorList>
            <person name="Amado M."/>
            <person name="Almeida R."/>
            <person name="Schwientek T."/>
            <person name="Clausen H."/>
        </authorList>
    </citation>
    <scope>REVIEW</scope>
</reference>
<reference key="11">
    <citation type="journal article" date="2000" name="J. Biol. Chem.">
        <title>The beta1,3-galactosyltransferase beta3GalT-V is a stage-specific embryonic antigen-3 (SSEA-3) synthase.</title>
        <authorList>
            <person name="Zhou D."/>
            <person name="Henion T.R."/>
            <person name="Jungalwala F.B."/>
            <person name="Berger E.G."/>
            <person name="Hennet T."/>
        </authorList>
    </citation>
    <scope>FUNCTION</scope>
    <scope>CATALYTIC ACTIVITY</scope>
</reference>
<name>B3GT5_HUMAN</name>
<sequence>MAFPKMRLMYICLLVLGALCLYFSMYSLNPFKEQSFVYKKDGNFLKLPDTDCRQTPPFLVLLVTSSHKQLAERMAIRQTWGKERMVKGKQLKTFFLLGTTSSAAETKEVDQESQRHGDIIQKDFLDVYYNLTLKTMMGIEWVHRFCPQAAFVMKTDSDMFINVDYLTELLLKKNRTTRFFTGFLKLNEFPIRQPFSKWFVSKSEYPWDRYPPFCSGTGYVFSGDVASQVYNVSKSVPYIKLEDVFVGLCLERLNIRLEELHSQPTFFPGGLRFSVCLFRRIVACHFIKPRTLLDYWQALENSRGEDCPPV</sequence>
<dbReference type="EC" id="2.4.1.-" evidence="2 3"/>
<dbReference type="EMBL" id="AB020337">
    <property type="protein sequence ID" value="BAA77664.1"/>
    <property type="molecule type" value="mRNA"/>
</dbReference>
<dbReference type="EMBL" id="AF145784">
    <property type="protein sequence ID" value="AAF07880.1"/>
    <property type="molecule type" value="Genomic_DNA"/>
</dbReference>
<dbReference type="EMBL" id="AJ006078">
    <property type="protein sequence ID" value="CAB91547.1"/>
    <property type="molecule type" value="Genomic_DNA"/>
</dbReference>
<dbReference type="EMBL" id="AY372061">
    <property type="protein sequence ID" value="AAR08910.1"/>
    <property type="molecule type" value="mRNA"/>
</dbReference>
<dbReference type="EMBL" id="AK292951">
    <property type="protein sequence ID" value="BAF85640.1"/>
    <property type="molecule type" value="mRNA"/>
</dbReference>
<dbReference type="EMBL" id="AL163280">
    <property type="protein sequence ID" value="CAB90446.1"/>
    <property type="molecule type" value="Genomic_DNA"/>
</dbReference>
<dbReference type="EMBL" id="CH471079">
    <property type="protein sequence ID" value="EAX09629.1"/>
    <property type="molecule type" value="Genomic_DNA"/>
</dbReference>
<dbReference type="EMBL" id="CH471079">
    <property type="protein sequence ID" value="EAX09630.1"/>
    <property type="molecule type" value="Genomic_DNA"/>
</dbReference>
<dbReference type="EMBL" id="CH471079">
    <property type="protein sequence ID" value="EAX09631.1"/>
    <property type="molecule type" value="Genomic_DNA"/>
</dbReference>
<dbReference type="EMBL" id="CH471079">
    <property type="protein sequence ID" value="EAX09632.1"/>
    <property type="molecule type" value="Genomic_DNA"/>
</dbReference>
<dbReference type="EMBL" id="BC104862">
    <property type="protein sequence ID" value="AAI04863.1"/>
    <property type="molecule type" value="mRNA"/>
</dbReference>
<dbReference type="EMBL" id="BC104864">
    <property type="protein sequence ID" value="AAI04865.1"/>
    <property type="molecule type" value="mRNA"/>
</dbReference>
<dbReference type="EMBL" id="AB041413">
    <property type="protein sequence ID" value="BAA94498.1"/>
    <property type="molecule type" value="Genomic_DNA"/>
</dbReference>
<dbReference type="EMBL" id="AB041416">
    <property type="protein sequence ID" value="BAA94501.1"/>
    <property type="molecule type" value="Genomic_DNA"/>
</dbReference>
<dbReference type="CCDS" id="CCDS13667.1"/>
<dbReference type="RefSeq" id="NP_001265579.1">
    <property type="nucleotide sequence ID" value="NM_001278650.2"/>
</dbReference>
<dbReference type="RefSeq" id="NP_001343265.1">
    <property type="nucleotide sequence ID" value="NM_001356336.2"/>
</dbReference>
<dbReference type="RefSeq" id="NP_001343267.1">
    <property type="nucleotide sequence ID" value="NM_001356338.2"/>
</dbReference>
<dbReference type="RefSeq" id="NP_001343268.1">
    <property type="nucleotide sequence ID" value="NM_001356339.2"/>
</dbReference>
<dbReference type="RefSeq" id="NP_006048.1">
    <property type="nucleotide sequence ID" value="NM_006057.3"/>
</dbReference>
<dbReference type="RefSeq" id="NP_149360.1">
    <property type="nucleotide sequence ID" value="NM_033170.3"/>
</dbReference>
<dbReference type="RefSeq" id="NP_149361.1">
    <property type="nucleotide sequence ID" value="NM_033171.3"/>
</dbReference>
<dbReference type="RefSeq" id="NP_149362.2">
    <property type="nucleotide sequence ID" value="NM_033172.2"/>
</dbReference>
<dbReference type="RefSeq" id="XP_016883716.1">
    <property type="nucleotide sequence ID" value="XM_017028227.1"/>
</dbReference>
<dbReference type="RefSeq" id="XP_016883717.1">
    <property type="nucleotide sequence ID" value="XM_017028228.1"/>
</dbReference>
<dbReference type="RefSeq" id="XP_016883718.1">
    <property type="nucleotide sequence ID" value="XM_017028229.1"/>
</dbReference>
<dbReference type="RefSeq" id="XP_016883719.1">
    <property type="nucleotide sequence ID" value="XM_017028230.1"/>
</dbReference>
<dbReference type="RefSeq" id="XP_016883720.1">
    <property type="nucleotide sequence ID" value="XM_017028231.1"/>
</dbReference>
<dbReference type="RefSeq" id="XP_016883721.1">
    <property type="nucleotide sequence ID" value="XM_017028232.1"/>
</dbReference>
<dbReference type="RefSeq" id="XP_016883722.1">
    <property type="nucleotide sequence ID" value="XM_017028233.1"/>
</dbReference>
<dbReference type="RefSeq" id="XP_016883723.1">
    <property type="nucleotide sequence ID" value="XM_017028234.1"/>
</dbReference>
<dbReference type="RefSeq" id="XP_016883724.1">
    <property type="nucleotide sequence ID" value="XM_017028235.1"/>
</dbReference>
<dbReference type="RefSeq" id="XP_016883725.1">
    <property type="nucleotide sequence ID" value="XM_017028236.1"/>
</dbReference>
<dbReference type="RefSeq" id="XP_016883726.1">
    <property type="nucleotide sequence ID" value="XM_017028237.1"/>
</dbReference>
<dbReference type="RefSeq" id="XP_016883727.1">
    <property type="nucleotide sequence ID" value="XM_017028238.1"/>
</dbReference>
<dbReference type="RefSeq" id="XP_016883728.1">
    <property type="nucleotide sequence ID" value="XM_017028239.1"/>
</dbReference>
<dbReference type="RefSeq" id="XP_016883729.1">
    <property type="nucleotide sequence ID" value="XM_017028240.1"/>
</dbReference>
<dbReference type="RefSeq" id="XP_016883730.1">
    <property type="nucleotide sequence ID" value="XM_017028241.1"/>
</dbReference>
<dbReference type="SMR" id="Q9Y2C3"/>
<dbReference type="BioGRID" id="115601">
    <property type="interactions" value="49"/>
</dbReference>
<dbReference type="FunCoup" id="Q9Y2C3">
    <property type="interactions" value="333"/>
</dbReference>
<dbReference type="IntAct" id="Q9Y2C3">
    <property type="interactions" value="24"/>
</dbReference>
<dbReference type="STRING" id="9606.ENSP00000381699"/>
<dbReference type="ChEMBL" id="CHEMBL2321635"/>
<dbReference type="SwissLipids" id="SLP:000000792"/>
<dbReference type="SwissLipids" id="SLP:000000844"/>
<dbReference type="CAZy" id="GT31">
    <property type="family name" value="Glycosyltransferase Family 31"/>
</dbReference>
<dbReference type="GlyCosmos" id="Q9Y2C3">
    <property type="glycosylation" value="3 sites, No reported glycans"/>
</dbReference>
<dbReference type="GlyGen" id="Q9Y2C3">
    <property type="glycosylation" value="3 sites"/>
</dbReference>
<dbReference type="iPTMnet" id="Q9Y2C3"/>
<dbReference type="PhosphoSitePlus" id="Q9Y2C3"/>
<dbReference type="BioMuta" id="B3GALT5"/>
<dbReference type="DMDM" id="13123995"/>
<dbReference type="jPOST" id="Q9Y2C3"/>
<dbReference type="MassIVE" id="Q9Y2C3"/>
<dbReference type="PaxDb" id="9606-ENSP00000381699"/>
<dbReference type="PeptideAtlas" id="Q9Y2C3"/>
<dbReference type="ProteomicsDB" id="85724"/>
<dbReference type="Antibodypedia" id="23457">
    <property type="antibodies" value="107 antibodies from 23 providers"/>
</dbReference>
<dbReference type="DNASU" id="10317"/>
<dbReference type="Ensembl" id="ENST00000343118.6">
    <property type="protein sequence ID" value="ENSP00000343318.4"/>
    <property type="gene ID" value="ENSG00000183778.19"/>
</dbReference>
<dbReference type="Ensembl" id="ENST00000380618.5">
    <property type="protein sequence ID" value="ENSP00000369992.1"/>
    <property type="gene ID" value="ENSG00000183778.19"/>
</dbReference>
<dbReference type="Ensembl" id="ENST00000380620.8">
    <property type="protein sequence ID" value="ENSP00000369994.3"/>
    <property type="gene ID" value="ENSG00000183778.19"/>
</dbReference>
<dbReference type="Ensembl" id="ENST00000398714.4">
    <property type="protein sequence ID" value="ENSP00000381699.4"/>
    <property type="gene ID" value="ENSG00000183778.19"/>
</dbReference>
<dbReference type="Ensembl" id="ENST00000615480.5">
    <property type="protein sequence ID" value="ENSP00000480285.1"/>
    <property type="gene ID" value="ENSG00000183778.19"/>
</dbReference>
<dbReference type="Ensembl" id="ENST00000682542.1">
    <property type="protein sequence ID" value="ENSP00000507453.1"/>
    <property type="gene ID" value="ENSG00000183778.19"/>
</dbReference>
<dbReference type="Ensembl" id="ENST00000683344.1">
    <property type="protein sequence ID" value="ENSP00000508165.1"/>
    <property type="gene ID" value="ENSG00000183778.19"/>
</dbReference>
<dbReference type="Ensembl" id="ENST00000684187.2">
    <property type="protein sequence ID" value="ENSP00000506797.1"/>
    <property type="gene ID" value="ENSG00000183778.19"/>
</dbReference>
<dbReference type="Ensembl" id="ENST00000684495.1">
    <property type="protein sequence ID" value="ENSP00000507285.1"/>
    <property type="gene ID" value="ENSG00000183778.19"/>
</dbReference>
<dbReference type="GeneID" id="10317"/>
<dbReference type="KEGG" id="hsa:10317"/>
<dbReference type="MANE-Select" id="ENST00000684187.2">
    <property type="protein sequence ID" value="ENSP00000506797.1"/>
    <property type="RefSeq nucleotide sequence ID" value="NM_001356336.2"/>
    <property type="RefSeq protein sequence ID" value="NP_001343265.1"/>
</dbReference>
<dbReference type="UCSC" id="uc002yyb.3">
    <property type="organism name" value="human"/>
</dbReference>
<dbReference type="AGR" id="HGNC:920"/>
<dbReference type="CTD" id="10317"/>
<dbReference type="DisGeNET" id="10317"/>
<dbReference type="GeneCards" id="B3GALT5"/>
<dbReference type="HGNC" id="HGNC:920">
    <property type="gene designation" value="B3GALT5"/>
</dbReference>
<dbReference type="HPA" id="ENSG00000183778">
    <property type="expression patterns" value="Tissue enriched (intestine)"/>
</dbReference>
<dbReference type="MIM" id="604066">
    <property type="type" value="gene"/>
</dbReference>
<dbReference type="neXtProt" id="NX_Q9Y2C3"/>
<dbReference type="OpenTargets" id="ENSG00000183778"/>
<dbReference type="PharmGKB" id="PA25213"/>
<dbReference type="VEuPathDB" id="HostDB:ENSG00000183778"/>
<dbReference type="eggNOG" id="KOG2287">
    <property type="taxonomic scope" value="Eukaryota"/>
</dbReference>
<dbReference type="GeneTree" id="ENSGT00940000160964"/>
<dbReference type="HOGENOM" id="CLU_036849_2_4_1"/>
<dbReference type="InParanoid" id="Q9Y2C3"/>
<dbReference type="OMA" id="HSQQTFF"/>
<dbReference type="OrthoDB" id="2139606at2759"/>
<dbReference type="PAN-GO" id="Q9Y2C3">
    <property type="GO annotations" value="2 GO annotations based on evolutionary models"/>
</dbReference>
<dbReference type="PhylomeDB" id="Q9Y2C3"/>
<dbReference type="TreeFam" id="TF318639"/>
<dbReference type="BioCyc" id="MetaCyc:MONOMER-20081"/>
<dbReference type="PathwayCommons" id="Q9Y2C3"/>
<dbReference type="Reactome" id="R-HSA-9037629">
    <property type="pathway name" value="Lewis blood group biosynthesis"/>
</dbReference>
<dbReference type="SignaLink" id="Q9Y2C3"/>
<dbReference type="UniPathway" id="UPA00378"/>
<dbReference type="BioGRID-ORCS" id="10317">
    <property type="hits" value="17 hits in 1141 CRISPR screens"/>
</dbReference>
<dbReference type="ChiTaRS" id="B3GALT5">
    <property type="organism name" value="human"/>
</dbReference>
<dbReference type="GeneWiki" id="B3GALT5"/>
<dbReference type="GenomeRNAi" id="10317"/>
<dbReference type="Pharos" id="Q9Y2C3">
    <property type="development level" value="Tbio"/>
</dbReference>
<dbReference type="PRO" id="PR:Q9Y2C3"/>
<dbReference type="Proteomes" id="UP000005640">
    <property type="component" value="Chromosome 21"/>
</dbReference>
<dbReference type="RNAct" id="Q9Y2C3">
    <property type="molecule type" value="protein"/>
</dbReference>
<dbReference type="Bgee" id="ENSG00000183778">
    <property type="expression patterns" value="Expressed in palpebral conjunctiva and 104 other cell types or tissues"/>
</dbReference>
<dbReference type="ExpressionAtlas" id="Q9Y2C3">
    <property type="expression patterns" value="baseline and differential"/>
</dbReference>
<dbReference type="GO" id="GO:0005783">
    <property type="term" value="C:endoplasmic reticulum"/>
    <property type="evidence" value="ECO:0007005"/>
    <property type="project" value="UniProtKB"/>
</dbReference>
<dbReference type="GO" id="GO:0005794">
    <property type="term" value="C:Golgi apparatus"/>
    <property type="evidence" value="ECO:0007005"/>
    <property type="project" value="UniProtKB"/>
</dbReference>
<dbReference type="GO" id="GO:0000139">
    <property type="term" value="C:Golgi membrane"/>
    <property type="evidence" value="ECO:0000318"/>
    <property type="project" value="GO_Central"/>
</dbReference>
<dbReference type="GO" id="GO:0008499">
    <property type="term" value="F:N-acetyl-beta-D-glucosaminide beta-(1,3)-galactosyltransferase activity"/>
    <property type="evidence" value="ECO:0000318"/>
    <property type="project" value="GO_Central"/>
</dbReference>
<dbReference type="GO" id="GO:0006629">
    <property type="term" value="P:lipid metabolic process"/>
    <property type="evidence" value="ECO:0007669"/>
    <property type="project" value="UniProtKB-KW"/>
</dbReference>
<dbReference type="GO" id="GO:0009312">
    <property type="term" value="P:oligosaccharide biosynthetic process"/>
    <property type="evidence" value="ECO:0000304"/>
    <property type="project" value="Reactome"/>
</dbReference>
<dbReference type="GO" id="GO:0006486">
    <property type="term" value="P:protein glycosylation"/>
    <property type="evidence" value="ECO:0000304"/>
    <property type="project" value="ProtInc"/>
</dbReference>
<dbReference type="GO" id="GO:0006493">
    <property type="term" value="P:protein O-linked glycosylation"/>
    <property type="evidence" value="ECO:0000318"/>
    <property type="project" value="GO_Central"/>
</dbReference>
<dbReference type="GO" id="GO:0009617">
    <property type="term" value="P:response to bacterium"/>
    <property type="evidence" value="ECO:0007669"/>
    <property type="project" value="Ensembl"/>
</dbReference>
<dbReference type="FunFam" id="3.90.550.50:FF:000001">
    <property type="entry name" value="Hexosyltransferase"/>
    <property type="match status" value="1"/>
</dbReference>
<dbReference type="Gene3D" id="3.90.550.50">
    <property type="match status" value="1"/>
</dbReference>
<dbReference type="InterPro" id="IPR002659">
    <property type="entry name" value="Glyco_trans_31"/>
</dbReference>
<dbReference type="PANTHER" id="PTHR11214:SF265">
    <property type="entry name" value="BETA-1,3-GALACTOSYLTRANSFERASE 5"/>
    <property type="match status" value="1"/>
</dbReference>
<dbReference type="PANTHER" id="PTHR11214">
    <property type="entry name" value="BETA-1,3-N-ACETYLGLUCOSAMINYLTRANSFERASE"/>
    <property type="match status" value="1"/>
</dbReference>
<dbReference type="Pfam" id="PF01762">
    <property type="entry name" value="Galactosyl_T"/>
    <property type="match status" value="1"/>
</dbReference>
<accession>Q9Y2C3</accession>
<accession>A8KA86</accession>
<accession>D3DSI3</accession>
<accession>Q2M3L5</accession>
<accession>Q53Z19</accession>
<accession>Q9NY96</accession>
<accession>Q9P1X6</accession>
<accession>Q9P1X7</accession>